<gene>
    <name evidence="1" type="primary">rpsM</name>
    <name type="ordered locus">STER_1883</name>
</gene>
<accession>Q03IH5</accession>
<evidence type="ECO:0000255" key="1">
    <source>
        <dbReference type="HAMAP-Rule" id="MF_01315"/>
    </source>
</evidence>
<evidence type="ECO:0000256" key="2">
    <source>
        <dbReference type="SAM" id="MobiDB-lite"/>
    </source>
</evidence>
<evidence type="ECO:0000305" key="3"/>
<keyword id="KW-0687">Ribonucleoprotein</keyword>
<keyword id="KW-0689">Ribosomal protein</keyword>
<keyword id="KW-0694">RNA-binding</keyword>
<keyword id="KW-0699">rRNA-binding</keyword>
<keyword id="KW-0820">tRNA-binding</keyword>
<name>RS13_STRTD</name>
<organism>
    <name type="scientific">Streptococcus thermophilus (strain ATCC BAA-491 / LMD-9)</name>
    <dbReference type="NCBI Taxonomy" id="322159"/>
    <lineage>
        <taxon>Bacteria</taxon>
        <taxon>Bacillati</taxon>
        <taxon>Bacillota</taxon>
        <taxon>Bacilli</taxon>
        <taxon>Lactobacillales</taxon>
        <taxon>Streptococcaceae</taxon>
        <taxon>Streptococcus</taxon>
    </lineage>
</organism>
<protein>
    <recommendedName>
        <fullName evidence="1">Small ribosomal subunit protein uS13</fullName>
    </recommendedName>
    <alternativeName>
        <fullName evidence="3">30S ribosomal protein S13</fullName>
    </alternativeName>
</protein>
<feature type="chain" id="PRO_0000306726" description="Small ribosomal subunit protein uS13">
    <location>
        <begin position="1"/>
        <end position="121"/>
    </location>
</feature>
<feature type="region of interest" description="Disordered" evidence="2">
    <location>
        <begin position="95"/>
        <end position="121"/>
    </location>
</feature>
<feature type="compositionally biased region" description="Basic residues" evidence="2">
    <location>
        <begin position="106"/>
        <end position="121"/>
    </location>
</feature>
<sequence length="121" mass="13421">MARIAGVDIPNDKRVVISLTYVYGIGLATSKKILAAAGVSEDIRVKDLTNDQEDAIRREVDAIKVEGDLRREVNLNIKRLMEIGSYRGIRHRRGLPVRGQNTKNNARTRKGKAVAIAGKKK</sequence>
<proteinExistence type="inferred from homology"/>
<comment type="function">
    <text evidence="1">Located at the top of the head of the 30S subunit, it contacts several helices of the 16S rRNA. In the 70S ribosome it contacts the 23S rRNA (bridge B1a) and protein L5 of the 50S subunit (bridge B1b), connecting the 2 subunits; these bridges are implicated in subunit movement. Contacts the tRNAs in the A and P-sites.</text>
</comment>
<comment type="subunit">
    <text evidence="1">Part of the 30S ribosomal subunit. Forms a loose heterodimer with protein S19. Forms two bridges to the 50S subunit in the 70S ribosome.</text>
</comment>
<comment type="similarity">
    <text evidence="1">Belongs to the universal ribosomal protein uS13 family.</text>
</comment>
<dbReference type="EMBL" id="CP000419">
    <property type="protein sequence ID" value="ABJ66997.1"/>
    <property type="molecule type" value="Genomic_DNA"/>
</dbReference>
<dbReference type="RefSeq" id="WP_002885820.1">
    <property type="nucleotide sequence ID" value="NZ_CP086001.1"/>
</dbReference>
<dbReference type="SMR" id="Q03IH5"/>
<dbReference type="GeneID" id="93793063"/>
<dbReference type="KEGG" id="ste:STER_1883"/>
<dbReference type="HOGENOM" id="CLU_103849_1_1_9"/>
<dbReference type="GO" id="GO:0005829">
    <property type="term" value="C:cytosol"/>
    <property type="evidence" value="ECO:0007669"/>
    <property type="project" value="TreeGrafter"/>
</dbReference>
<dbReference type="GO" id="GO:0015935">
    <property type="term" value="C:small ribosomal subunit"/>
    <property type="evidence" value="ECO:0007669"/>
    <property type="project" value="TreeGrafter"/>
</dbReference>
<dbReference type="GO" id="GO:0019843">
    <property type="term" value="F:rRNA binding"/>
    <property type="evidence" value="ECO:0007669"/>
    <property type="project" value="UniProtKB-UniRule"/>
</dbReference>
<dbReference type="GO" id="GO:0003735">
    <property type="term" value="F:structural constituent of ribosome"/>
    <property type="evidence" value="ECO:0007669"/>
    <property type="project" value="InterPro"/>
</dbReference>
<dbReference type="GO" id="GO:0000049">
    <property type="term" value="F:tRNA binding"/>
    <property type="evidence" value="ECO:0007669"/>
    <property type="project" value="UniProtKB-UniRule"/>
</dbReference>
<dbReference type="GO" id="GO:0006412">
    <property type="term" value="P:translation"/>
    <property type="evidence" value="ECO:0007669"/>
    <property type="project" value="UniProtKB-UniRule"/>
</dbReference>
<dbReference type="FunFam" id="1.10.8.50:FF:000001">
    <property type="entry name" value="30S ribosomal protein S13"/>
    <property type="match status" value="1"/>
</dbReference>
<dbReference type="FunFam" id="4.10.910.10:FF:000001">
    <property type="entry name" value="30S ribosomal protein S13"/>
    <property type="match status" value="1"/>
</dbReference>
<dbReference type="Gene3D" id="1.10.8.50">
    <property type="match status" value="1"/>
</dbReference>
<dbReference type="Gene3D" id="4.10.910.10">
    <property type="entry name" value="30s ribosomal protein s13, domain 2"/>
    <property type="match status" value="1"/>
</dbReference>
<dbReference type="HAMAP" id="MF_01315">
    <property type="entry name" value="Ribosomal_uS13"/>
    <property type="match status" value="1"/>
</dbReference>
<dbReference type="InterPro" id="IPR027437">
    <property type="entry name" value="Rbsml_uS13_C"/>
</dbReference>
<dbReference type="InterPro" id="IPR001892">
    <property type="entry name" value="Ribosomal_uS13"/>
</dbReference>
<dbReference type="InterPro" id="IPR010979">
    <property type="entry name" value="Ribosomal_uS13-like_H2TH"/>
</dbReference>
<dbReference type="InterPro" id="IPR019980">
    <property type="entry name" value="Ribosomal_uS13_bac-type"/>
</dbReference>
<dbReference type="InterPro" id="IPR018269">
    <property type="entry name" value="Ribosomal_uS13_CS"/>
</dbReference>
<dbReference type="NCBIfam" id="TIGR03631">
    <property type="entry name" value="uS13_bact"/>
    <property type="match status" value="1"/>
</dbReference>
<dbReference type="PANTHER" id="PTHR10871">
    <property type="entry name" value="30S RIBOSOMAL PROTEIN S13/40S RIBOSOMAL PROTEIN S18"/>
    <property type="match status" value="1"/>
</dbReference>
<dbReference type="PANTHER" id="PTHR10871:SF1">
    <property type="entry name" value="SMALL RIBOSOMAL SUBUNIT PROTEIN US13M"/>
    <property type="match status" value="1"/>
</dbReference>
<dbReference type="Pfam" id="PF00416">
    <property type="entry name" value="Ribosomal_S13"/>
    <property type="match status" value="1"/>
</dbReference>
<dbReference type="PIRSF" id="PIRSF002134">
    <property type="entry name" value="Ribosomal_S13"/>
    <property type="match status" value="1"/>
</dbReference>
<dbReference type="SUPFAM" id="SSF46946">
    <property type="entry name" value="S13-like H2TH domain"/>
    <property type="match status" value="1"/>
</dbReference>
<dbReference type="PROSITE" id="PS00646">
    <property type="entry name" value="RIBOSOMAL_S13_1"/>
    <property type="match status" value="1"/>
</dbReference>
<dbReference type="PROSITE" id="PS50159">
    <property type="entry name" value="RIBOSOMAL_S13_2"/>
    <property type="match status" value="1"/>
</dbReference>
<reference key="1">
    <citation type="journal article" date="2006" name="Proc. Natl. Acad. Sci. U.S.A.">
        <title>Comparative genomics of the lactic acid bacteria.</title>
        <authorList>
            <person name="Makarova K.S."/>
            <person name="Slesarev A."/>
            <person name="Wolf Y.I."/>
            <person name="Sorokin A."/>
            <person name="Mirkin B."/>
            <person name="Koonin E.V."/>
            <person name="Pavlov A."/>
            <person name="Pavlova N."/>
            <person name="Karamychev V."/>
            <person name="Polouchine N."/>
            <person name="Shakhova V."/>
            <person name="Grigoriev I."/>
            <person name="Lou Y."/>
            <person name="Rohksar D."/>
            <person name="Lucas S."/>
            <person name="Huang K."/>
            <person name="Goodstein D.M."/>
            <person name="Hawkins T."/>
            <person name="Plengvidhya V."/>
            <person name="Welker D."/>
            <person name="Hughes J."/>
            <person name="Goh Y."/>
            <person name="Benson A."/>
            <person name="Baldwin K."/>
            <person name="Lee J.-H."/>
            <person name="Diaz-Muniz I."/>
            <person name="Dosti B."/>
            <person name="Smeianov V."/>
            <person name="Wechter W."/>
            <person name="Barabote R."/>
            <person name="Lorca G."/>
            <person name="Altermann E."/>
            <person name="Barrangou R."/>
            <person name="Ganesan B."/>
            <person name="Xie Y."/>
            <person name="Rawsthorne H."/>
            <person name="Tamir D."/>
            <person name="Parker C."/>
            <person name="Breidt F."/>
            <person name="Broadbent J.R."/>
            <person name="Hutkins R."/>
            <person name="O'Sullivan D."/>
            <person name="Steele J."/>
            <person name="Unlu G."/>
            <person name="Saier M.H. Jr."/>
            <person name="Klaenhammer T."/>
            <person name="Richardson P."/>
            <person name="Kozyavkin S."/>
            <person name="Weimer B.C."/>
            <person name="Mills D.A."/>
        </authorList>
    </citation>
    <scope>NUCLEOTIDE SEQUENCE [LARGE SCALE GENOMIC DNA]</scope>
    <source>
        <strain>ATCC BAA-491 / LMD-9</strain>
    </source>
</reference>